<reference key="1">
    <citation type="journal article" date="2006" name="Science">
        <title>Genomic islands and the ecology and evolution of Prochlorococcus.</title>
        <authorList>
            <person name="Coleman M.L."/>
            <person name="Sullivan M.B."/>
            <person name="Martiny A.C."/>
            <person name="Steglich C."/>
            <person name="Barry K."/>
            <person name="Delong E.F."/>
            <person name="Chisholm S.W."/>
        </authorList>
    </citation>
    <scope>NUCLEOTIDE SEQUENCE [LARGE SCALE GENOMIC DNA]</scope>
    <source>
        <strain>MIT 9312</strain>
    </source>
</reference>
<protein>
    <recommendedName>
        <fullName evidence="1">Polyribonucleotide nucleotidyltransferase</fullName>
        <ecNumber evidence="1">2.7.7.8</ecNumber>
    </recommendedName>
    <alternativeName>
        <fullName evidence="1">Polynucleotide phosphorylase</fullName>
        <shortName evidence="1">PNPase</shortName>
    </alternativeName>
</protein>
<proteinExistence type="inferred from homology"/>
<comment type="function">
    <text evidence="1">Involved in mRNA degradation. Catalyzes the phosphorolysis of single-stranded polyribonucleotides processively in the 3'- to 5'-direction.</text>
</comment>
<comment type="catalytic activity">
    <reaction evidence="1">
        <text>RNA(n+1) + phosphate = RNA(n) + a ribonucleoside 5'-diphosphate</text>
        <dbReference type="Rhea" id="RHEA:22096"/>
        <dbReference type="Rhea" id="RHEA-COMP:14527"/>
        <dbReference type="Rhea" id="RHEA-COMP:17342"/>
        <dbReference type="ChEBI" id="CHEBI:43474"/>
        <dbReference type="ChEBI" id="CHEBI:57930"/>
        <dbReference type="ChEBI" id="CHEBI:140395"/>
        <dbReference type="EC" id="2.7.7.8"/>
    </reaction>
</comment>
<comment type="cofactor">
    <cofactor evidence="1">
        <name>Mg(2+)</name>
        <dbReference type="ChEBI" id="CHEBI:18420"/>
    </cofactor>
</comment>
<comment type="subcellular location">
    <subcellularLocation>
        <location evidence="1">Cytoplasm</location>
    </subcellularLocation>
</comment>
<comment type="similarity">
    <text evidence="1">Belongs to the polyribonucleotide nucleotidyltransferase family.</text>
</comment>
<dbReference type="EC" id="2.7.7.8" evidence="1"/>
<dbReference type="EMBL" id="CP000111">
    <property type="protein sequence ID" value="ABB50351.1"/>
    <property type="molecule type" value="Genomic_DNA"/>
</dbReference>
<dbReference type="RefSeq" id="WP_011376837.1">
    <property type="nucleotide sequence ID" value="NC_007577.1"/>
</dbReference>
<dbReference type="SMR" id="Q319U4"/>
<dbReference type="STRING" id="74546.PMT9312_1292"/>
<dbReference type="KEGG" id="pmi:PMT9312_1292"/>
<dbReference type="eggNOG" id="COG1185">
    <property type="taxonomic scope" value="Bacteria"/>
</dbReference>
<dbReference type="HOGENOM" id="CLU_004217_2_2_3"/>
<dbReference type="OrthoDB" id="9804305at2"/>
<dbReference type="Proteomes" id="UP000002715">
    <property type="component" value="Chromosome"/>
</dbReference>
<dbReference type="GO" id="GO:0005829">
    <property type="term" value="C:cytosol"/>
    <property type="evidence" value="ECO:0007669"/>
    <property type="project" value="TreeGrafter"/>
</dbReference>
<dbReference type="GO" id="GO:0000175">
    <property type="term" value="F:3'-5'-RNA exonuclease activity"/>
    <property type="evidence" value="ECO:0007669"/>
    <property type="project" value="TreeGrafter"/>
</dbReference>
<dbReference type="GO" id="GO:0000287">
    <property type="term" value="F:magnesium ion binding"/>
    <property type="evidence" value="ECO:0007669"/>
    <property type="project" value="UniProtKB-UniRule"/>
</dbReference>
<dbReference type="GO" id="GO:0004654">
    <property type="term" value="F:polyribonucleotide nucleotidyltransferase activity"/>
    <property type="evidence" value="ECO:0007669"/>
    <property type="project" value="UniProtKB-UniRule"/>
</dbReference>
<dbReference type="GO" id="GO:0003723">
    <property type="term" value="F:RNA binding"/>
    <property type="evidence" value="ECO:0007669"/>
    <property type="project" value="UniProtKB-UniRule"/>
</dbReference>
<dbReference type="GO" id="GO:0006402">
    <property type="term" value="P:mRNA catabolic process"/>
    <property type="evidence" value="ECO:0007669"/>
    <property type="project" value="UniProtKB-UniRule"/>
</dbReference>
<dbReference type="GO" id="GO:0006396">
    <property type="term" value="P:RNA processing"/>
    <property type="evidence" value="ECO:0007669"/>
    <property type="project" value="InterPro"/>
</dbReference>
<dbReference type="CDD" id="cd02393">
    <property type="entry name" value="KH-I_PNPase"/>
    <property type="match status" value="1"/>
</dbReference>
<dbReference type="CDD" id="cd11363">
    <property type="entry name" value="RNase_PH_PNPase_1"/>
    <property type="match status" value="1"/>
</dbReference>
<dbReference type="CDD" id="cd11364">
    <property type="entry name" value="RNase_PH_PNPase_2"/>
    <property type="match status" value="1"/>
</dbReference>
<dbReference type="CDD" id="cd04472">
    <property type="entry name" value="S1_PNPase"/>
    <property type="match status" value="1"/>
</dbReference>
<dbReference type="FunFam" id="3.30.1370.10:FF:000001">
    <property type="entry name" value="Polyribonucleotide nucleotidyltransferase"/>
    <property type="match status" value="1"/>
</dbReference>
<dbReference type="FunFam" id="3.30.230.70:FF:000001">
    <property type="entry name" value="Polyribonucleotide nucleotidyltransferase"/>
    <property type="match status" value="1"/>
</dbReference>
<dbReference type="FunFam" id="3.30.230.70:FF:000002">
    <property type="entry name" value="Polyribonucleotide nucleotidyltransferase"/>
    <property type="match status" value="1"/>
</dbReference>
<dbReference type="FunFam" id="2.40.50.140:FF:000189">
    <property type="entry name" value="Polyribonucleotide nucleotidyltransferase, putative"/>
    <property type="match status" value="1"/>
</dbReference>
<dbReference type="Gene3D" id="3.30.230.70">
    <property type="entry name" value="GHMP Kinase, N-terminal domain"/>
    <property type="match status" value="2"/>
</dbReference>
<dbReference type="Gene3D" id="3.30.1370.10">
    <property type="entry name" value="K Homology domain, type 1"/>
    <property type="match status" value="1"/>
</dbReference>
<dbReference type="Gene3D" id="2.40.50.140">
    <property type="entry name" value="Nucleic acid-binding proteins"/>
    <property type="match status" value="1"/>
</dbReference>
<dbReference type="HAMAP" id="MF_01595">
    <property type="entry name" value="PNPase"/>
    <property type="match status" value="1"/>
</dbReference>
<dbReference type="InterPro" id="IPR001247">
    <property type="entry name" value="ExoRNase_PH_dom1"/>
</dbReference>
<dbReference type="InterPro" id="IPR015847">
    <property type="entry name" value="ExoRNase_PH_dom2"/>
</dbReference>
<dbReference type="InterPro" id="IPR036345">
    <property type="entry name" value="ExoRNase_PH_dom2_sf"/>
</dbReference>
<dbReference type="InterPro" id="IPR004087">
    <property type="entry name" value="KH_dom"/>
</dbReference>
<dbReference type="InterPro" id="IPR004088">
    <property type="entry name" value="KH_dom_type_1"/>
</dbReference>
<dbReference type="InterPro" id="IPR036612">
    <property type="entry name" value="KH_dom_type_1_sf"/>
</dbReference>
<dbReference type="InterPro" id="IPR012340">
    <property type="entry name" value="NA-bd_OB-fold"/>
</dbReference>
<dbReference type="InterPro" id="IPR012162">
    <property type="entry name" value="PNPase"/>
</dbReference>
<dbReference type="InterPro" id="IPR027408">
    <property type="entry name" value="PNPase/RNase_PH_dom_sf"/>
</dbReference>
<dbReference type="InterPro" id="IPR015848">
    <property type="entry name" value="PNPase_PH_RNA-bd_bac/org-type"/>
</dbReference>
<dbReference type="InterPro" id="IPR036456">
    <property type="entry name" value="PNPase_PH_RNA-bd_sf"/>
</dbReference>
<dbReference type="InterPro" id="IPR020568">
    <property type="entry name" value="Ribosomal_Su5_D2-typ_SF"/>
</dbReference>
<dbReference type="InterPro" id="IPR003029">
    <property type="entry name" value="S1_domain"/>
</dbReference>
<dbReference type="NCBIfam" id="TIGR03591">
    <property type="entry name" value="polynuc_phos"/>
    <property type="match status" value="1"/>
</dbReference>
<dbReference type="NCBIfam" id="NF008805">
    <property type="entry name" value="PRK11824.1"/>
    <property type="match status" value="1"/>
</dbReference>
<dbReference type="PANTHER" id="PTHR11252">
    <property type="entry name" value="POLYRIBONUCLEOTIDE NUCLEOTIDYLTRANSFERASE"/>
    <property type="match status" value="1"/>
</dbReference>
<dbReference type="PANTHER" id="PTHR11252:SF0">
    <property type="entry name" value="POLYRIBONUCLEOTIDE NUCLEOTIDYLTRANSFERASE 1, MITOCHONDRIAL"/>
    <property type="match status" value="1"/>
</dbReference>
<dbReference type="Pfam" id="PF00013">
    <property type="entry name" value="KH_1"/>
    <property type="match status" value="1"/>
</dbReference>
<dbReference type="Pfam" id="PF03726">
    <property type="entry name" value="PNPase"/>
    <property type="match status" value="1"/>
</dbReference>
<dbReference type="Pfam" id="PF01138">
    <property type="entry name" value="RNase_PH"/>
    <property type="match status" value="2"/>
</dbReference>
<dbReference type="Pfam" id="PF03725">
    <property type="entry name" value="RNase_PH_C"/>
    <property type="match status" value="1"/>
</dbReference>
<dbReference type="Pfam" id="PF00575">
    <property type="entry name" value="S1"/>
    <property type="match status" value="1"/>
</dbReference>
<dbReference type="PIRSF" id="PIRSF005499">
    <property type="entry name" value="PNPase"/>
    <property type="match status" value="1"/>
</dbReference>
<dbReference type="SMART" id="SM00322">
    <property type="entry name" value="KH"/>
    <property type="match status" value="1"/>
</dbReference>
<dbReference type="SMART" id="SM00316">
    <property type="entry name" value="S1"/>
    <property type="match status" value="1"/>
</dbReference>
<dbReference type="SUPFAM" id="SSF54791">
    <property type="entry name" value="Eukaryotic type KH-domain (KH-domain type I)"/>
    <property type="match status" value="1"/>
</dbReference>
<dbReference type="SUPFAM" id="SSF50249">
    <property type="entry name" value="Nucleic acid-binding proteins"/>
    <property type="match status" value="1"/>
</dbReference>
<dbReference type="SUPFAM" id="SSF46915">
    <property type="entry name" value="Polynucleotide phosphorylase/guanosine pentaphosphate synthase (PNPase/GPSI), domain 3"/>
    <property type="match status" value="1"/>
</dbReference>
<dbReference type="SUPFAM" id="SSF55666">
    <property type="entry name" value="Ribonuclease PH domain 2-like"/>
    <property type="match status" value="2"/>
</dbReference>
<dbReference type="SUPFAM" id="SSF54211">
    <property type="entry name" value="Ribosomal protein S5 domain 2-like"/>
    <property type="match status" value="2"/>
</dbReference>
<dbReference type="PROSITE" id="PS50084">
    <property type="entry name" value="KH_TYPE_1"/>
    <property type="match status" value="1"/>
</dbReference>
<dbReference type="PROSITE" id="PS50126">
    <property type="entry name" value="S1"/>
    <property type="match status" value="1"/>
</dbReference>
<organism>
    <name type="scientific">Prochlorococcus marinus (strain MIT 9312)</name>
    <dbReference type="NCBI Taxonomy" id="74546"/>
    <lineage>
        <taxon>Bacteria</taxon>
        <taxon>Bacillati</taxon>
        <taxon>Cyanobacteriota</taxon>
        <taxon>Cyanophyceae</taxon>
        <taxon>Synechococcales</taxon>
        <taxon>Prochlorococcaceae</taxon>
        <taxon>Prochlorococcus</taxon>
    </lineage>
</organism>
<keyword id="KW-0963">Cytoplasm</keyword>
<keyword id="KW-0460">Magnesium</keyword>
<keyword id="KW-0479">Metal-binding</keyword>
<keyword id="KW-0548">Nucleotidyltransferase</keyword>
<keyword id="KW-0694">RNA-binding</keyword>
<keyword id="KW-0808">Transferase</keyword>
<sequence>MEGQNKSITFDGREIRLTTGLYAPQANGSVMIECGDTSLLVTATKTTKKEVADFLPLICDYEEKLYAAGRIPGGFMRREGRPPERATLISRLIDRPMRPLFPSWMRDEIQIVASCLSLDERVPADVLAVTGASIATLLGEIPFHGPMAAVRVGLIGDDFILNPSYREIEKGDLDIVVAGSPDGIVMIEAGANQLSEQDTIEAIDFGYESVTELIKSQVDLLKDLGIKQVKSSAPEEDNTLPSYLEKNCTKGIELVLKKFDQSKDERDLELEKIKVDTQAKIESLKDDNELKVLLSENDKLLSSDFKKLTKKLMRSQIINDGKRVDGRELDEVRKISASAGILPKRVHGSALFQRGLTQVLSTTTLGTPSDAQEMDDLNPSTEKTYLHHYNFPPFSVGETRPMRTPGRREIGHGALAERAIIPVLPGKETFPYVLRVVSEVLSSNGSTSMGSVCGSTLSLLDAGVPLKALVSGTAMGLIKEGKEIRILTDIQGIEDFLGDMDFKVAGTEKGITALQMDMKITGLSVSVISDAIKKARPARLHILEKMQEAIDKPQESLSPHAPRLLSFRIDPELIGTVIGPGGRTIKGITERTNTKIDIEDGGIVTIASHDGAAAEEAQKIIEGLTRKVHEGEIFTGVVTRIIPIGAFVEILPGKEGMVHISQLSEARVERVEDVVRQGDEVTVRVREIDSRGRINLTLRGVSQNSGMSYPEPTPTPVAPLN</sequence>
<accession>Q319U4</accession>
<name>PNP_PROM9</name>
<evidence type="ECO:0000255" key="1">
    <source>
        <dbReference type="HAMAP-Rule" id="MF_01595"/>
    </source>
</evidence>
<evidence type="ECO:0000256" key="2">
    <source>
        <dbReference type="SAM" id="MobiDB-lite"/>
    </source>
</evidence>
<feature type="chain" id="PRO_0000329768" description="Polyribonucleotide nucleotidyltransferase">
    <location>
        <begin position="1"/>
        <end position="721"/>
    </location>
</feature>
<feature type="domain" description="KH" evidence="1">
    <location>
        <begin position="562"/>
        <end position="621"/>
    </location>
</feature>
<feature type="domain" description="S1 motif" evidence="1">
    <location>
        <begin position="631"/>
        <end position="699"/>
    </location>
</feature>
<feature type="region of interest" description="Disordered" evidence="2">
    <location>
        <begin position="702"/>
        <end position="721"/>
    </location>
</feature>
<feature type="compositionally biased region" description="Pro residues" evidence="2">
    <location>
        <begin position="711"/>
        <end position="721"/>
    </location>
</feature>
<feature type="binding site" evidence="1">
    <location>
        <position position="495"/>
    </location>
    <ligand>
        <name>Mg(2+)</name>
        <dbReference type="ChEBI" id="CHEBI:18420"/>
    </ligand>
</feature>
<feature type="binding site" evidence="1">
    <location>
        <position position="501"/>
    </location>
    <ligand>
        <name>Mg(2+)</name>
        <dbReference type="ChEBI" id="CHEBI:18420"/>
    </ligand>
</feature>
<gene>
    <name evidence="1" type="primary">pnp</name>
    <name type="ordered locus">PMT9312_1292</name>
</gene>